<sequence length="334" mass="36438">MSEPIRVLVTGAAGQIAYSLLYSIGNGSVFGKDQPIILVLLDITPMMGVLDGVLMELQDCALPLLKDVIATDKEEIAFKDLDVAILVGSMPRRDGMERKDLLKANVKIFKCQGAALDKYAKKSVKVIVVGNPANTNCLTASKSAPSIPKENFSCLTRLDHNRAKAQIALKLGVTSDDVKNVIIWGNHSSTQYPDVNHAKVKLQGKEVGVYEALKDDSWLKGEFITTVQQRGAAVIKARKLSSAMSAAKAICDHVRDIWFGTPEGEFVSMGIISDGNSYGIPDDLLYSFPVTIKDKTWKVVEGLPINDFSREKMDLTAKELAEEKETAFEFLASA</sequence>
<reference key="1">
    <citation type="submission" date="2005-08" db="EMBL/GenBank/DDBJ databases">
        <authorList>
            <consortium name="NIH - Mammalian Gene Collection (MGC) project"/>
        </authorList>
    </citation>
    <scope>NUCLEOTIDE SEQUENCE [LARGE SCALE MRNA]</scope>
    <source>
        <strain>Crossbred X Angus</strain>
        <tissue>Ileum</tissue>
    </source>
</reference>
<proteinExistence type="evidence at transcript level"/>
<feature type="initiator methionine" description="Removed" evidence="3">
    <location>
        <position position="1"/>
    </location>
</feature>
<feature type="chain" id="PRO_0000226735" description="Malate dehydrogenase, cytoplasmic">
    <location>
        <begin position="2"/>
        <end position="334"/>
    </location>
</feature>
<feature type="active site" description="Proton acceptor" evidence="1">
    <location>
        <position position="187"/>
    </location>
</feature>
<feature type="binding site" evidence="1">
    <location>
        <begin position="11"/>
        <end position="17"/>
    </location>
    <ligand>
        <name>NAD(+)</name>
        <dbReference type="ChEBI" id="CHEBI:57540"/>
    </ligand>
</feature>
<feature type="binding site" evidence="1">
    <location>
        <position position="42"/>
    </location>
    <ligand>
        <name>NAD(+)</name>
        <dbReference type="ChEBI" id="CHEBI:57540"/>
    </ligand>
</feature>
<feature type="binding site" evidence="1">
    <location>
        <position position="92"/>
    </location>
    <ligand>
        <name>substrate</name>
    </ligand>
</feature>
<feature type="binding site" evidence="1">
    <location>
        <position position="98"/>
    </location>
    <ligand>
        <name>substrate</name>
    </ligand>
</feature>
<feature type="binding site" evidence="1">
    <location>
        <position position="105"/>
    </location>
    <ligand>
        <name>NAD(+)</name>
        <dbReference type="ChEBI" id="CHEBI:57540"/>
    </ligand>
</feature>
<feature type="binding site" evidence="1">
    <location>
        <position position="112"/>
    </location>
    <ligand>
        <name>NAD(+)</name>
        <dbReference type="ChEBI" id="CHEBI:57540"/>
    </ligand>
</feature>
<feature type="binding site" evidence="1">
    <location>
        <begin position="129"/>
        <end position="131"/>
    </location>
    <ligand>
        <name>NAD(+)</name>
        <dbReference type="ChEBI" id="CHEBI:57540"/>
    </ligand>
</feature>
<feature type="binding site" evidence="1">
    <location>
        <position position="131"/>
    </location>
    <ligand>
        <name>substrate</name>
    </ligand>
</feature>
<feature type="binding site" evidence="1">
    <location>
        <position position="162"/>
    </location>
    <ligand>
        <name>substrate</name>
    </ligand>
</feature>
<feature type="modified residue" description="N-acetylserine" evidence="3">
    <location>
        <position position="2"/>
    </location>
</feature>
<feature type="modified residue" description="N6-succinyllysine" evidence="2">
    <location>
        <position position="110"/>
    </location>
</feature>
<feature type="modified residue" description="N6-acetyllysine" evidence="3">
    <location>
        <position position="118"/>
    </location>
</feature>
<feature type="modified residue" description="N6-acetyllysine" evidence="3">
    <location>
        <position position="121"/>
    </location>
</feature>
<feature type="modified residue" description="N6-succinyllysine" evidence="2">
    <location>
        <position position="214"/>
    </location>
</feature>
<feature type="modified residue" description="Phosphoserine" evidence="2">
    <location>
        <position position="217"/>
    </location>
</feature>
<feature type="modified residue" description="Omega-N-methylarginine" evidence="2">
    <location>
        <position position="230"/>
    </location>
</feature>
<feature type="modified residue" description="Phosphoserine" evidence="3">
    <location>
        <position position="241"/>
    </location>
</feature>
<feature type="modified residue" description="N6-acetyllysine; alternate" evidence="3">
    <location>
        <position position="298"/>
    </location>
</feature>
<feature type="modified residue" description="N6-succinyllysine; alternate" evidence="2">
    <location>
        <position position="298"/>
    </location>
</feature>
<feature type="modified residue" description="Phosphoserine" evidence="2">
    <location>
        <position position="309"/>
    </location>
</feature>
<feature type="modified residue" description="N6-succinyllysine" evidence="2">
    <location>
        <position position="318"/>
    </location>
</feature>
<feature type="modified residue" description="Phosphoserine" evidence="3">
    <location>
        <position position="333"/>
    </location>
</feature>
<organism>
    <name type="scientific">Bos taurus</name>
    <name type="common">Bovine</name>
    <dbReference type="NCBI Taxonomy" id="9913"/>
    <lineage>
        <taxon>Eukaryota</taxon>
        <taxon>Metazoa</taxon>
        <taxon>Chordata</taxon>
        <taxon>Craniata</taxon>
        <taxon>Vertebrata</taxon>
        <taxon>Euteleostomi</taxon>
        <taxon>Mammalia</taxon>
        <taxon>Eutheria</taxon>
        <taxon>Laurasiatheria</taxon>
        <taxon>Artiodactyla</taxon>
        <taxon>Ruminantia</taxon>
        <taxon>Pecora</taxon>
        <taxon>Bovidae</taxon>
        <taxon>Bovinae</taxon>
        <taxon>Bos</taxon>
    </lineage>
</organism>
<evidence type="ECO:0000250" key="1">
    <source>
        <dbReference type="UniProtKB" id="P11708"/>
    </source>
</evidence>
<evidence type="ECO:0000250" key="2">
    <source>
        <dbReference type="UniProtKB" id="P14152"/>
    </source>
</evidence>
<evidence type="ECO:0000250" key="3">
    <source>
        <dbReference type="UniProtKB" id="P40925"/>
    </source>
</evidence>
<evidence type="ECO:0000305" key="4"/>
<gene>
    <name type="primary">MDH1</name>
</gene>
<protein>
    <recommendedName>
        <fullName>Malate dehydrogenase, cytoplasmic</fullName>
        <ecNumber>1.1.1.37</ecNumber>
    </recommendedName>
    <alternativeName>
        <fullName evidence="4">Aromatic alpha-keto acid reductase</fullName>
        <shortName evidence="4">KAR</shortName>
        <ecNumber evidence="3">1.1.1.96</ecNumber>
    </alternativeName>
    <alternativeName>
        <fullName>Cytosolic malate dehydrogenase</fullName>
    </alternativeName>
</protein>
<dbReference type="EC" id="1.1.1.37"/>
<dbReference type="EC" id="1.1.1.96" evidence="3"/>
<dbReference type="EMBL" id="BC102133">
    <property type="protein sequence ID" value="AAI02134.1"/>
    <property type="molecule type" value="mRNA"/>
</dbReference>
<dbReference type="RefSeq" id="NP_001029800.1">
    <property type="nucleotide sequence ID" value="NM_001034628.3"/>
</dbReference>
<dbReference type="EMDB" id="EMD-50664"/>
<dbReference type="SMR" id="Q3T145"/>
<dbReference type="FunCoup" id="Q3T145">
    <property type="interactions" value="1762"/>
</dbReference>
<dbReference type="STRING" id="9913.ENSBTAP00000069808"/>
<dbReference type="PaxDb" id="9913-ENSBTAP00000025691"/>
<dbReference type="PeptideAtlas" id="Q3T145"/>
<dbReference type="Ensembl" id="ENSBTAT00000073367.2">
    <property type="protein sequence ID" value="ENSBTAP00000069808.1"/>
    <property type="gene ID" value="ENSBTAG00000019295.7"/>
</dbReference>
<dbReference type="GeneID" id="535182"/>
<dbReference type="KEGG" id="bta:535182"/>
<dbReference type="CTD" id="4190"/>
<dbReference type="VEuPathDB" id="HostDB:ENSBTAG00000019295"/>
<dbReference type="VGNC" id="VGNC:31333">
    <property type="gene designation" value="MDH1"/>
</dbReference>
<dbReference type="eggNOG" id="KOG1496">
    <property type="taxonomic scope" value="Eukaryota"/>
</dbReference>
<dbReference type="GeneTree" id="ENSGT00530000063410"/>
<dbReference type="HOGENOM" id="CLU_040727_2_0_1"/>
<dbReference type="InParanoid" id="Q3T145"/>
<dbReference type="OMA" id="GMIGSNM"/>
<dbReference type="OrthoDB" id="4069699at2759"/>
<dbReference type="TreeFam" id="TF105826"/>
<dbReference type="Reactome" id="R-BTA-9856872">
    <property type="pathway name" value="Malate-aspartate shuttle"/>
</dbReference>
<dbReference type="Proteomes" id="UP000009136">
    <property type="component" value="Chromosome 11"/>
</dbReference>
<dbReference type="Bgee" id="ENSBTAG00000019295">
    <property type="expression patterns" value="Expressed in cardiac ventricle and 103 other cell types or tissues"/>
</dbReference>
<dbReference type="GO" id="GO:0005813">
    <property type="term" value="C:centrosome"/>
    <property type="evidence" value="ECO:0007669"/>
    <property type="project" value="Ensembl"/>
</dbReference>
<dbReference type="GO" id="GO:0005829">
    <property type="term" value="C:cytosol"/>
    <property type="evidence" value="ECO:0000318"/>
    <property type="project" value="GO_Central"/>
</dbReference>
<dbReference type="GO" id="GO:0047995">
    <property type="term" value="F:hydroxyphenylpyruvate reductase activity"/>
    <property type="evidence" value="ECO:0007669"/>
    <property type="project" value="RHEA"/>
</dbReference>
<dbReference type="GO" id="GO:0030060">
    <property type="term" value="F:L-malate dehydrogenase (NAD+) activity"/>
    <property type="evidence" value="ECO:0000318"/>
    <property type="project" value="GO_Central"/>
</dbReference>
<dbReference type="GO" id="GO:0006108">
    <property type="term" value="P:malate metabolic process"/>
    <property type="evidence" value="ECO:0000318"/>
    <property type="project" value="GO_Central"/>
</dbReference>
<dbReference type="GO" id="GO:0043490">
    <property type="term" value="P:malate-aspartate shuttle"/>
    <property type="evidence" value="ECO:0007669"/>
    <property type="project" value="Ensembl"/>
</dbReference>
<dbReference type="GO" id="GO:0006734">
    <property type="term" value="P:NADH metabolic process"/>
    <property type="evidence" value="ECO:0000318"/>
    <property type="project" value="GO_Central"/>
</dbReference>
<dbReference type="GO" id="GO:0006739">
    <property type="term" value="P:NADP metabolic process"/>
    <property type="evidence" value="ECO:0007669"/>
    <property type="project" value="Ensembl"/>
</dbReference>
<dbReference type="GO" id="GO:0006107">
    <property type="term" value="P:oxaloacetate metabolic process"/>
    <property type="evidence" value="ECO:0000318"/>
    <property type="project" value="GO_Central"/>
</dbReference>
<dbReference type="GO" id="GO:0006099">
    <property type="term" value="P:tricarboxylic acid cycle"/>
    <property type="evidence" value="ECO:0000318"/>
    <property type="project" value="GO_Central"/>
</dbReference>
<dbReference type="CDD" id="cd01336">
    <property type="entry name" value="MDH_cytoplasmic_cytosolic"/>
    <property type="match status" value="1"/>
</dbReference>
<dbReference type="FunFam" id="3.40.50.720:FF:000010">
    <property type="entry name" value="Malate dehydrogenase"/>
    <property type="match status" value="1"/>
</dbReference>
<dbReference type="FunFam" id="3.90.110.10:FF:000002">
    <property type="entry name" value="Malate dehydrogenase"/>
    <property type="match status" value="1"/>
</dbReference>
<dbReference type="Gene3D" id="3.90.110.10">
    <property type="entry name" value="Lactate dehydrogenase/glycoside hydrolase, family 4, C-terminal"/>
    <property type="match status" value="1"/>
</dbReference>
<dbReference type="Gene3D" id="3.40.50.720">
    <property type="entry name" value="NAD(P)-binding Rossmann-like Domain"/>
    <property type="match status" value="1"/>
</dbReference>
<dbReference type="HAMAP" id="MF_01517">
    <property type="entry name" value="Malate_dehydrog_2"/>
    <property type="match status" value="1"/>
</dbReference>
<dbReference type="InterPro" id="IPR001557">
    <property type="entry name" value="L-lactate/malate_DH"/>
</dbReference>
<dbReference type="InterPro" id="IPR022383">
    <property type="entry name" value="Lactate/malate_DH_C"/>
</dbReference>
<dbReference type="InterPro" id="IPR001236">
    <property type="entry name" value="Lactate/malate_DH_N"/>
</dbReference>
<dbReference type="InterPro" id="IPR015955">
    <property type="entry name" value="Lactate_DH/Glyco_Ohase_4_C"/>
</dbReference>
<dbReference type="InterPro" id="IPR001252">
    <property type="entry name" value="Malate_DH_AS"/>
</dbReference>
<dbReference type="InterPro" id="IPR011274">
    <property type="entry name" value="Malate_DH_NAD-dep_euk"/>
</dbReference>
<dbReference type="InterPro" id="IPR010945">
    <property type="entry name" value="Malate_DH_type2"/>
</dbReference>
<dbReference type="InterPro" id="IPR036291">
    <property type="entry name" value="NAD(P)-bd_dom_sf"/>
</dbReference>
<dbReference type="NCBIfam" id="TIGR01759">
    <property type="entry name" value="MalateDH-SF1"/>
    <property type="match status" value="1"/>
</dbReference>
<dbReference type="NCBIfam" id="TIGR01758">
    <property type="entry name" value="MDH_euk_cyt"/>
    <property type="match status" value="1"/>
</dbReference>
<dbReference type="NCBIfam" id="NF003916">
    <property type="entry name" value="PRK05442.1"/>
    <property type="match status" value="1"/>
</dbReference>
<dbReference type="PANTHER" id="PTHR23382">
    <property type="entry name" value="MALATE DEHYDROGENASE"/>
    <property type="match status" value="1"/>
</dbReference>
<dbReference type="Pfam" id="PF02866">
    <property type="entry name" value="Ldh_1_C"/>
    <property type="match status" value="1"/>
</dbReference>
<dbReference type="Pfam" id="PF00056">
    <property type="entry name" value="Ldh_1_N"/>
    <property type="match status" value="1"/>
</dbReference>
<dbReference type="PIRSF" id="PIRSF000102">
    <property type="entry name" value="Lac_mal_DH"/>
    <property type="match status" value="1"/>
</dbReference>
<dbReference type="SUPFAM" id="SSF56327">
    <property type="entry name" value="LDH C-terminal domain-like"/>
    <property type="match status" value="1"/>
</dbReference>
<dbReference type="SUPFAM" id="SSF51735">
    <property type="entry name" value="NAD(P)-binding Rossmann-fold domains"/>
    <property type="match status" value="1"/>
</dbReference>
<dbReference type="PROSITE" id="PS00068">
    <property type="entry name" value="MDH"/>
    <property type="match status" value="1"/>
</dbReference>
<name>MDHC_BOVIN</name>
<keyword id="KW-0007">Acetylation</keyword>
<keyword id="KW-0963">Cytoplasm</keyword>
<keyword id="KW-0488">Methylation</keyword>
<keyword id="KW-0520">NAD</keyword>
<keyword id="KW-0560">Oxidoreductase</keyword>
<keyword id="KW-0597">Phosphoprotein</keyword>
<keyword id="KW-1185">Reference proteome</keyword>
<keyword id="KW-0816">Tricarboxylic acid cycle</keyword>
<keyword id="KW-0832">Ubl conjugation</keyword>
<comment type="function">
    <text evidence="3">Catalyzes the reduction of aromatic alpha-keto acids in the presence of NADH. Plays essential roles in the malate-aspartate shuttle and the tricarboxylic acid cycle, important in mitochondrial NADH supply for oxidative phosphorylation. Catalyzes the reduction of 2-oxoglutarate to 2-hydroxyglutarate, leading to elevated reactive oxygen species (ROS).</text>
</comment>
<comment type="catalytic activity">
    <reaction evidence="3">
        <text>(S)-malate + NAD(+) = oxaloacetate + NADH + H(+)</text>
        <dbReference type="Rhea" id="RHEA:21432"/>
        <dbReference type="ChEBI" id="CHEBI:15378"/>
        <dbReference type="ChEBI" id="CHEBI:15589"/>
        <dbReference type="ChEBI" id="CHEBI:16452"/>
        <dbReference type="ChEBI" id="CHEBI:57540"/>
        <dbReference type="ChEBI" id="CHEBI:57945"/>
        <dbReference type="EC" id="1.1.1.37"/>
    </reaction>
    <physiologicalReaction direction="left-to-right" evidence="3">
        <dbReference type="Rhea" id="RHEA:21433"/>
    </physiologicalReaction>
    <physiologicalReaction direction="right-to-left" evidence="3">
        <dbReference type="Rhea" id="RHEA:21434"/>
    </physiologicalReaction>
</comment>
<comment type="catalytic activity">
    <reaction evidence="3">
        <text>(2R)-2-hydroxy-3-(4-hydroxyphenyl)propanoate + NAD(+) = 3-(4-hydroxyphenyl)pyruvate + NADH + H(+)</text>
        <dbReference type="Rhea" id="RHEA:10780"/>
        <dbReference type="ChEBI" id="CHEBI:10980"/>
        <dbReference type="ChEBI" id="CHEBI:15378"/>
        <dbReference type="ChEBI" id="CHEBI:36242"/>
        <dbReference type="ChEBI" id="CHEBI:57540"/>
        <dbReference type="ChEBI" id="CHEBI:57945"/>
        <dbReference type="EC" id="1.1.1.96"/>
    </reaction>
    <physiologicalReaction direction="right-to-left" evidence="3">
        <dbReference type="Rhea" id="RHEA:10782"/>
    </physiologicalReaction>
</comment>
<comment type="catalytic activity">
    <reaction evidence="3">
        <text>(S)-2-hydroxyglutarate + NAD(+) = 2-oxoglutarate + NADH + H(+)</text>
        <dbReference type="Rhea" id="RHEA:57172"/>
        <dbReference type="ChEBI" id="CHEBI:15378"/>
        <dbReference type="ChEBI" id="CHEBI:16782"/>
        <dbReference type="ChEBI" id="CHEBI:16810"/>
        <dbReference type="ChEBI" id="CHEBI:57540"/>
        <dbReference type="ChEBI" id="CHEBI:57945"/>
    </reaction>
    <physiologicalReaction direction="right-to-left" evidence="3">
        <dbReference type="Rhea" id="RHEA:57174"/>
    </physiologicalReaction>
</comment>
<comment type="subunit">
    <text evidence="1">Homodimer.</text>
</comment>
<comment type="subcellular location">
    <subcellularLocation>
        <location evidence="3">Cytoplasm</location>
        <location evidence="3">Cytosol</location>
    </subcellularLocation>
</comment>
<comment type="PTM">
    <text evidence="3">ISGylated.</text>
</comment>
<comment type="PTM">
    <text evidence="3">Acetylation at Lys-118 dramatically enhances enzymatic activity and promotes adipogenic differentiation.</text>
</comment>
<comment type="similarity">
    <text evidence="4">Belongs to the LDH/MDH superfamily. MDH type 2 family.</text>
</comment>
<accession>Q3T145</accession>